<reference evidence="7" key="1">
    <citation type="journal article" date="2018" name="Genome Biol.">
        <title>SKESA: strategic k-mer extension for scrupulous assemblies.</title>
        <authorList>
            <person name="Souvorov A."/>
            <person name="Agarwala R."/>
            <person name="Lipman D.J."/>
        </authorList>
    </citation>
    <scope>NUCLEOTIDE SEQUENCE [LARGE SCALE GENOMIC DNA]</scope>
    <source>
        <strain>DMS 61/81</strain>
    </source>
</reference>
<reference evidence="9" key="2">
    <citation type="journal article" date="2021" name="Cell Rep.">
        <title>Molecular basis of CD-NTase nucleotide selection in CBASS anti-phage defense.</title>
        <authorList>
            <person name="Govande A.A."/>
            <person name="Duncan-Lowey B."/>
            <person name="Eaglesham J.B."/>
            <person name="Whiteley A.T."/>
            <person name="Kranzusch P.J."/>
        </authorList>
    </citation>
    <scope>X-RAY CRYSTALLOGRAPHY (2.60 ANGSTROMS) IN COMPLEX WITH GTP</scope>
    <scope>PROBABLE FUNCTION</scope>
    <scope>PROBABLE ACTIVE SITES</scope>
    <scope>COFACTOR</scope>
</reference>
<feature type="chain" id="PRO_0000459386" description="Probable cyclic AMP-AMP-GMP nucleotide synthase">
    <location>
        <begin position="1"/>
        <end position="381"/>
    </location>
</feature>
<feature type="region of interest" description="Disordered" evidence="2">
    <location>
        <begin position="348"/>
        <end position="381"/>
    </location>
</feature>
<feature type="active site" evidence="6">
    <location>
        <position position="69"/>
    </location>
</feature>
<feature type="active site" evidence="6">
    <location>
        <position position="71"/>
    </location>
</feature>
<feature type="active site" evidence="6">
    <location>
        <position position="121"/>
    </location>
</feature>
<feature type="binding site" evidence="3 8">
    <location>
        <position position="53"/>
    </location>
    <ligand>
        <name>GTP</name>
        <dbReference type="ChEBI" id="CHEBI:37565"/>
        <label>1</label>
    </ligand>
</feature>
<feature type="binding site" evidence="3 8">
    <location>
        <position position="56"/>
    </location>
    <ligand>
        <name>GTP</name>
        <dbReference type="ChEBI" id="CHEBI:37565"/>
        <label>1</label>
    </ligand>
</feature>
<feature type="binding site" evidence="3 8">
    <location>
        <position position="69"/>
    </location>
    <ligand>
        <name>Mg(2+)</name>
        <dbReference type="ChEBI" id="CHEBI:18420"/>
        <label>A</label>
        <note>catalytic</note>
    </ligand>
</feature>
<feature type="binding site" evidence="3 8">
    <location>
        <position position="69"/>
    </location>
    <ligand>
        <name>Mg(2+)</name>
        <dbReference type="ChEBI" id="CHEBI:18420"/>
        <label>B</label>
        <note>catalytic</note>
    </ligand>
</feature>
<feature type="binding site" evidence="3 8">
    <location>
        <position position="71"/>
    </location>
    <ligand>
        <name>Mg(2+)</name>
        <dbReference type="ChEBI" id="CHEBI:18420"/>
        <label>A</label>
        <note>catalytic</note>
    </ligand>
</feature>
<feature type="binding site" evidence="3 8">
    <location>
        <position position="71"/>
    </location>
    <ligand>
        <name>Mg(2+)</name>
        <dbReference type="ChEBI" id="CHEBI:18420"/>
        <label>B</label>
        <note>catalytic</note>
    </ligand>
</feature>
<feature type="binding site" evidence="3 8">
    <location>
        <position position="109"/>
    </location>
    <ligand>
        <name>GTP</name>
        <dbReference type="ChEBI" id="CHEBI:37565"/>
        <label>2</label>
    </ligand>
</feature>
<feature type="binding site" evidence="3 8">
    <location>
        <position position="121"/>
    </location>
    <ligand>
        <name>Mg(2+)</name>
        <dbReference type="ChEBI" id="CHEBI:18420"/>
        <label>A</label>
        <note>catalytic</note>
    </ligand>
</feature>
<feature type="binding site" evidence="3 8">
    <location>
        <position position="196"/>
    </location>
    <ligand>
        <name>Mg(2+)</name>
        <dbReference type="ChEBI" id="CHEBI:18420"/>
        <label>C</label>
    </ligand>
</feature>
<feature type="binding site" evidence="3 8">
    <location>
        <position position="197"/>
    </location>
    <ligand>
        <name>GTP</name>
        <dbReference type="ChEBI" id="CHEBI:37565"/>
        <label>2</label>
    </ligand>
</feature>
<feature type="binding site" evidence="3 8">
    <location>
        <position position="204"/>
    </location>
    <ligand>
        <name>GTP</name>
        <dbReference type="ChEBI" id="CHEBI:37565"/>
        <label>2</label>
    </ligand>
</feature>
<feature type="binding site" evidence="3 8">
    <location>
        <position position="205"/>
    </location>
    <ligand>
        <name>GTP</name>
        <dbReference type="ChEBI" id="CHEBI:37565"/>
        <label>2</label>
    </ligand>
</feature>
<feature type="binding site" evidence="3 8">
    <location>
        <position position="210"/>
    </location>
    <ligand>
        <name>GTP</name>
        <dbReference type="ChEBI" id="CHEBI:37565"/>
        <label>1</label>
    </ligand>
</feature>
<feature type="binding site" evidence="3 8">
    <location>
        <position position="307"/>
    </location>
    <ligand>
        <name>GTP</name>
        <dbReference type="ChEBI" id="CHEBI:37565"/>
        <label>2</label>
    </ligand>
</feature>
<feature type="site" description="Important for GTP discrimination" evidence="6">
    <location>
        <position position="51"/>
    </location>
</feature>
<feature type="helix" evidence="10">
    <location>
        <begin position="5"/>
        <end position="14"/>
    </location>
</feature>
<feature type="helix" evidence="10">
    <location>
        <begin position="18"/>
        <end position="37"/>
    </location>
</feature>
<feature type="helix" evidence="10">
    <location>
        <begin position="39"/>
        <end position="41"/>
    </location>
</feature>
<feature type="turn" evidence="10">
    <location>
        <begin position="42"/>
        <end position="44"/>
    </location>
</feature>
<feature type="strand" evidence="10">
    <location>
        <begin position="45"/>
        <end position="50"/>
    </location>
</feature>
<feature type="helix" evidence="10">
    <location>
        <begin position="52"/>
        <end position="55"/>
    </location>
</feature>
<feature type="helix" evidence="10">
    <location>
        <begin position="63"/>
        <end position="65"/>
    </location>
</feature>
<feature type="strand" evidence="10">
    <location>
        <begin position="69"/>
        <end position="76"/>
    </location>
</feature>
<feature type="turn" evidence="10">
    <location>
        <begin position="80"/>
        <end position="82"/>
    </location>
</feature>
<feature type="helix" evidence="10">
    <location>
        <begin position="85"/>
        <end position="89"/>
    </location>
</feature>
<feature type="helix" evidence="10">
    <location>
        <begin position="90"/>
        <end position="92"/>
    </location>
</feature>
<feature type="helix" evidence="10">
    <location>
        <begin position="93"/>
        <end position="99"/>
    </location>
</feature>
<feature type="turn" evidence="10">
    <location>
        <begin position="101"/>
        <end position="103"/>
    </location>
</feature>
<feature type="strand" evidence="10">
    <location>
        <begin position="104"/>
        <end position="107"/>
    </location>
</feature>
<feature type="strand" evidence="10">
    <location>
        <begin position="110"/>
        <end position="114"/>
    </location>
</feature>
<feature type="strand" evidence="10">
    <location>
        <begin position="119"/>
        <end position="126"/>
    </location>
</feature>
<feature type="helix" evidence="10">
    <location>
        <begin position="131"/>
        <end position="141"/>
    </location>
</feature>
<feature type="helix" evidence="10">
    <location>
        <begin position="144"/>
        <end position="147"/>
    </location>
</feature>
<feature type="turn" evidence="10">
    <location>
        <begin position="152"/>
        <end position="154"/>
    </location>
</feature>
<feature type="helix" evidence="10">
    <location>
        <begin position="184"/>
        <end position="186"/>
    </location>
</feature>
<feature type="turn" evidence="10">
    <location>
        <begin position="187"/>
        <end position="189"/>
    </location>
</feature>
<feature type="strand" evidence="10">
    <location>
        <begin position="192"/>
        <end position="195"/>
    </location>
</feature>
<feature type="strand" evidence="10">
    <location>
        <begin position="197"/>
        <end position="205"/>
    </location>
</feature>
<feature type="helix" evidence="10">
    <location>
        <begin position="207"/>
        <end position="220"/>
    </location>
</feature>
<feature type="turn" evidence="10">
    <location>
        <begin position="221"/>
        <end position="223"/>
    </location>
</feature>
<feature type="helix" evidence="10">
    <location>
        <begin position="224"/>
        <end position="238"/>
    </location>
</feature>
<feature type="turn" evidence="10">
    <location>
        <begin position="239"/>
        <end position="242"/>
    </location>
</feature>
<feature type="helix" evidence="10">
    <location>
        <begin position="250"/>
        <end position="259"/>
    </location>
</feature>
<feature type="helix" evidence="10">
    <location>
        <begin position="267"/>
        <end position="281"/>
    </location>
</feature>
<feature type="helix" evidence="10">
    <location>
        <begin position="283"/>
        <end position="287"/>
    </location>
</feature>
<feature type="strand" evidence="10">
    <location>
        <begin position="297"/>
        <end position="299"/>
    </location>
</feature>
<feature type="strand" evidence="10">
    <location>
        <begin position="306"/>
        <end position="308"/>
    </location>
</feature>
<feature type="helix" evidence="10">
    <location>
        <begin position="310"/>
        <end position="332"/>
    </location>
</feature>
<feature type="helix" evidence="10">
    <location>
        <begin position="336"/>
        <end position="347"/>
    </location>
</feature>
<dbReference type="EC" id="2.7.7.-" evidence="5"/>
<dbReference type="EMBL" id="DAARJL010000007">
    <property type="protein sequence ID" value="HAE2678956.1"/>
    <property type="molecule type" value="Genomic_DNA"/>
</dbReference>
<dbReference type="PDB" id="7LJM">
    <property type="method" value="X-ray"/>
    <property type="resolution" value="2.60 A"/>
    <property type="chains" value="A/B=1-381"/>
</dbReference>
<dbReference type="PDBsum" id="7LJM"/>
<dbReference type="SMR" id="A0A728KSL7"/>
<dbReference type="GO" id="GO:0005525">
    <property type="term" value="F:GTP binding"/>
    <property type="evidence" value="ECO:0007669"/>
    <property type="project" value="UniProtKB-KW"/>
</dbReference>
<dbReference type="GO" id="GO:0046872">
    <property type="term" value="F:metal ion binding"/>
    <property type="evidence" value="ECO:0007669"/>
    <property type="project" value="UniProtKB-KW"/>
</dbReference>
<dbReference type="GO" id="GO:0016779">
    <property type="term" value="F:nucleotidyltransferase activity"/>
    <property type="evidence" value="ECO:0007669"/>
    <property type="project" value="UniProtKB-KW"/>
</dbReference>
<dbReference type="GO" id="GO:0051607">
    <property type="term" value="P:defense response to virus"/>
    <property type="evidence" value="ECO:0007669"/>
    <property type="project" value="UniProtKB-KW"/>
</dbReference>
<dbReference type="GO" id="GO:0009117">
    <property type="term" value="P:nucleotide metabolic process"/>
    <property type="evidence" value="ECO:0007669"/>
    <property type="project" value="UniProtKB-KW"/>
</dbReference>
<dbReference type="InterPro" id="IPR043519">
    <property type="entry name" value="NT_sf"/>
</dbReference>
<dbReference type="Pfam" id="PF18144">
    <property type="entry name" value="SMODS"/>
    <property type="match status" value="1"/>
</dbReference>
<dbReference type="SUPFAM" id="SSF81301">
    <property type="entry name" value="Nucleotidyltransferase"/>
    <property type="match status" value="1"/>
</dbReference>
<keyword id="KW-0002">3D-structure</keyword>
<keyword id="KW-0051">Antiviral defense</keyword>
<keyword id="KW-0342">GTP-binding</keyword>
<keyword id="KW-0460">Magnesium</keyword>
<keyword id="KW-0479">Metal-binding</keyword>
<keyword id="KW-0546">Nucleotide metabolism</keyword>
<keyword id="KW-0547">Nucleotide-binding</keyword>
<keyword id="KW-0548">Nucleotidyltransferase</keyword>
<keyword id="KW-0808">Transferase</keyword>
<evidence type="ECO:0000250" key="1">
    <source>
        <dbReference type="UniProtKB" id="P0DSP4"/>
    </source>
</evidence>
<evidence type="ECO:0000256" key="2">
    <source>
        <dbReference type="SAM" id="MobiDB-lite"/>
    </source>
</evidence>
<evidence type="ECO:0000269" key="3">
    <source>
    </source>
</evidence>
<evidence type="ECO:0000303" key="4">
    <source>
    </source>
</evidence>
<evidence type="ECO:0000305" key="5"/>
<evidence type="ECO:0000305" key="6">
    <source>
    </source>
</evidence>
<evidence type="ECO:0000312" key="7">
    <source>
        <dbReference type="EMBL" id="HAE2678956.1"/>
    </source>
</evidence>
<evidence type="ECO:0000312" key="8">
    <source>
        <dbReference type="PDB" id="7LJM"/>
    </source>
</evidence>
<evidence type="ECO:0007744" key="9">
    <source>
        <dbReference type="PDB" id="7LJM"/>
    </source>
</evidence>
<evidence type="ECO:0007829" key="10">
    <source>
        <dbReference type="PDB" id="7LJM"/>
    </source>
</evidence>
<comment type="function">
    <text evidence="6">Cyclic nucleotide synthase (second messenger synthase) of a CBASS antivirus system (Probable) (PubMed:34077735). CBASS (cyclic oligonucleotide-based antiphage signaling system) provides immunity against bacteriophage. The CD-NTase protein synthesizes cyclic nucleotides in response to infection; these serve as specific second messenger signals. The signals activate a diverse range of effectors, leading to bacterial cell death and thus abortive phage infection (Probable) (PubMed:34077735).</text>
</comment>
<comment type="function">
    <text evidence="6">Cyclic nucleotide synthase, synthesizes a tricyclic nucleotide with AMP and GMP moieties, probably 3',3',3'-cyclic AMP-AMP-GMP (3'3'3'-cAAG) (Probable) (PubMed:34077735). Controls the activity of the associated CBASS effector protein (Probable) (PubMed:34077735).</text>
</comment>
<comment type="catalytic activity">
    <reaction evidence="6">
        <text>GTP + 2 ATP = 3',3',3'-cAAG + 3 diphosphate</text>
        <dbReference type="Rhea" id="RHEA:60476"/>
        <dbReference type="ChEBI" id="CHEBI:30616"/>
        <dbReference type="ChEBI" id="CHEBI:33019"/>
        <dbReference type="ChEBI" id="CHEBI:37565"/>
        <dbReference type="ChEBI" id="CHEBI:143810"/>
    </reaction>
</comment>
<comment type="cofactor">
    <cofactor evidence="3">
        <name>Mg(2+)</name>
        <dbReference type="ChEBI" id="CHEBI:18420"/>
    </cofactor>
    <text evidence="1 6">Binds 3 Mg(2+) ions per subunit; 1 is probably structural the other 2 are probably catalytic.</text>
</comment>
<comment type="similarity">
    <text evidence="6">Belongs to the CD-NTase family. D02 subfamily.</text>
</comment>
<accession>A0A728KSL7</accession>
<gene>
    <name evidence="4" type="primary">cdnD</name>
    <name evidence="7" type="ORF">GNB57_001779</name>
</gene>
<organism>
    <name type="scientific">Salmonella paratyphi B</name>
    <name type="common">Salmonella enterica subsp. enterica serovar Paratyphi B</name>
    <dbReference type="NCBI Taxonomy" id="57045"/>
    <lineage>
        <taxon>Bacteria</taxon>
        <taxon>Pseudomonadati</taxon>
        <taxon>Pseudomonadota</taxon>
        <taxon>Gammaproteobacteria</taxon>
        <taxon>Enterobacterales</taxon>
        <taxon>Enterobacteriaceae</taxon>
        <taxon>Salmonella</taxon>
    </lineage>
</organism>
<proteinExistence type="evidence at protein level"/>
<name>CDND_SALEB</name>
<sequence length="381" mass="43172">MELNSQFNAFLTNIRPTDPQKEDWKGGAKTLRERLNNYEPLKDIVVSTFLQGSIRRSTAIRPLNGKRPDVDIVVVTNLDHNQIAPQEAMDLFVPFLEKYYPEKWVPQGRSFGITLSYVELDLVITAIPASGEEKNLLEQLYRSESVLTVNSLEEQKDWRLNKSWKPSESGLFISNSANIQDAPLSEWKAHPLVLPDRDENKWGRTHPLAQIRWTAEKNRACNGHYINLVRAVKWWRQQNSDNLPKYPKGYPLEHLIGNALDDGTPSMGKGLVQLIDTFLSRWAYVYSLRSKPSLPDHGVEEHDVLARLSAEDFCLFYEGLEDAAIIARSALASQDPKESAELWRKLFGTKFPFPGPQGGDRSGGFTAPTQPAEPQKTGRFA</sequence>
<protein>
    <recommendedName>
        <fullName evidence="5">Probable cyclic AMP-AMP-GMP nucleotide synthase</fullName>
        <shortName evidence="4">SeCdnD</shortName>
        <ecNumber evidence="5">2.7.7.-</ecNumber>
    </recommendedName>
</protein>